<sequence>MATYAVGDLQGCLQPLKCLLERVKFDPAVDRLWLVGDLVNRGPESLQTLRYLYSIRHSLTCVLGNHDLHLLAAWQNVERLKKSDTLREIIEAPDADQLLDWLRQQKLLHYDEPRGIALVHAGIPPQWTLGKALELAGEVEEVLRDDERLKLYLDGMYGNEPNKWSKNLGGVERLRVITNYLTRMRFCTGTGKLDLKSKEGLGTAPKGYKPWFAHKDRRSRHVKIIFGHWAALEGRVDEPGIIALDTGCVWGGTMTLYNVDSGEYLRCDCADDGTLRPPAQPTKLIDQP</sequence>
<evidence type="ECO:0000255" key="1">
    <source>
        <dbReference type="HAMAP-Rule" id="MF_00199"/>
    </source>
</evidence>
<name>APAH_PSEPW</name>
<feature type="chain" id="PRO_1000099329" description="Bis(5'-nucleosyl)-tetraphosphatase, symmetrical">
    <location>
        <begin position="1"/>
        <end position="288"/>
    </location>
</feature>
<gene>
    <name evidence="1" type="primary">apaH</name>
    <name type="ordered locus">PputW619_4803</name>
</gene>
<accession>B1JE09</accession>
<organism>
    <name type="scientific">Pseudomonas putida (strain W619)</name>
    <dbReference type="NCBI Taxonomy" id="390235"/>
    <lineage>
        <taxon>Bacteria</taxon>
        <taxon>Pseudomonadati</taxon>
        <taxon>Pseudomonadota</taxon>
        <taxon>Gammaproteobacteria</taxon>
        <taxon>Pseudomonadales</taxon>
        <taxon>Pseudomonadaceae</taxon>
        <taxon>Pseudomonas</taxon>
    </lineage>
</organism>
<keyword id="KW-0378">Hydrolase</keyword>
<reference key="1">
    <citation type="submission" date="2008-02" db="EMBL/GenBank/DDBJ databases">
        <title>Complete sequence of Pseudomonas putida W619.</title>
        <authorList>
            <person name="Copeland A."/>
            <person name="Lucas S."/>
            <person name="Lapidus A."/>
            <person name="Barry K."/>
            <person name="Detter J.C."/>
            <person name="Glavina del Rio T."/>
            <person name="Dalin E."/>
            <person name="Tice H."/>
            <person name="Pitluck S."/>
            <person name="Chain P."/>
            <person name="Malfatti S."/>
            <person name="Shin M."/>
            <person name="Vergez L."/>
            <person name="Schmutz J."/>
            <person name="Larimer F."/>
            <person name="Land M."/>
            <person name="Hauser L."/>
            <person name="Kyrpides N."/>
            <person name="Kim E."/>
            <person name="Taghavi S."/>
            <person name="Vangronsveld D."/>
            <person name="van der Lelie D."/>
            <person name="Richardson P."/>
        </authorList>
    </citation>
    <scope>NUCLEOTIDE SEQUENCE [LARGE SCALE GENOMIC DNA]</scope>
    <source>
        <strain>W619</strain>
    </source>
</reference>
<protein>
    <recommendedName>
        <fullName evidence="1">Bis(5'-nucleosyl)-tetraphosphatase, symmetrical</fullName>
        <ecNumber evidence="1">3.6.1.41</ecNumber>
    </recommendedName>
    <alternativeName>
        <fullName evidence="1">Ap4A hydrolase</fullName>
    </alternativeName>
    <alternativeName>
        <fullName evidence="1">Diadenosine 5',5'''-P1,P4-tetraphosphate pyrophosphohydrolase</fullName>
    </alternativeName>
    <alternativeName>
        <fullName evidence="1">Diadenosine tetraphosphatase</fullName>
    </alternativeName>
</protein>
<proteinExistence type="inferred from homology"/>
<comment type="function">
    <text evidence="1">Hydrolyzes diadenosine 5',5'''-P1,P4-tetraphosphate to yield ADP.</text>
</comment>
<comment type="catalytic activity">
    <reaction evidence="1">
        <text>P(1),P(4)-bis(5'-adenosyl) tetraphosphate + H2O = 2 ADP + 2 H(+)</text>
        <dbReference type="Rhea" id="RHEA:24252"/>
        <dbReference type="ChEBI" id="CHEBI:15377"/>
        <dbReference type="ChEBI" id="CHEBI:15378"/>
        <dbReference type="ChEBI" id="CHEBI:58141"/>
        <dbReference type="ChEBI" id="CHEBI:456216"/>
        <dbReference type="EC" id="3.6.1.41"/>
    </reaction>
</comment>
<comment type="similarity">
    <text evidence="1">Belongs to the Ap4A hydrolase family.</text>
</comment>
<dbReference type="EC" id="3.6.1.41" evidence="1"/>
<dbReference type="EMBL" id="CP000949">
    <property type="protein sequence ID" value="ACA75279.1"/>
    <property type="molecule type" value="Genomic_DNA"/>
</dbReference>
<dbReference type="SMR" id="B1JE09"/>
<dbReference type="STRING" id="390235.PputW619_4803"/>
<dbReference type="KEGG" id="ppw:PputW619_4803"/>
<dbReference type="eggNOG" id="COG0639">
    <property type="taxonomic scope" value="Bacteria"/>
</dbReference>
<dbReference type="HOGENOM" id="CLU_056184_2_0_6"/>
<dbReference type="OrthoDB" id="9807890at2"/>
<dbReference type="GO" id="GO:0008803">
    <property type="term" value="F:bis(5'-nucleosyl)-tetraphosphatase (symmetrical) activity"/>
    <property type="evidence" value="ECO:0007669"/>
    <property type="project" value="UniProtKB-UniRule"/>
</dbReference>
<dbReference type="CDD" id="cd07422">
    <property type="entry name" value="MPP_ApaH"/>
    <property type="match status" value="1"/>
</dbReference>
<dbReference type="Gene3D" id="3.60.21.10">
    <property type="match status" value="1"/>
</dbReference>
<dbReference type="HAMAP" id="MF_00199">
    <property type="entry name" value="ApaH"/>
    <property type="match status" value="1"/>
</dbReference>
<dbReference type="InterPro" id="IPR004617">
    <property type="entry name" value="ApaH"/>
</dbReference>
<dbReference type="InterPro" id="IPR004843">
    <property type="entry name" value="Calcineurin-like_PHP_ApaH"/>
</dbReference>
<dbReference type="InterPro" id="IPR029052">
    <property type="entry name" value="Metallo-depent_PP-like"/>
</dbReference>
<dbReference type="NCBIfam" id="TIGR00668">
    <property type="entry name" value="apaH"/>
    <property type="match status" value="1"/>
</dbReference>
<dbReference type="NCBIfam" id="NF001204">
    <property type="entry name" value="PRK00166.1"/>
    <property type="match status" value="1"/>
</dbReference>
<dbReference type="PANTHER" id="PTHR40942">
    <property type="match status" value="1"/>
</dbReference>
<dbReference type="PANTHER" id="PTHR40942:SF4">
    <property type="entry name" value="CYTOCHROME C5"/>
    <property type="match status" value="1"/>
</dbReference>
<dbReference type="Pfam" id="PF00149">
    <property type="entry name" value="Metallophos"/>
    <property type="match status" value="1"/>
</dbReference>
<dbReference type="PIRSF" id="PIRSF000903">
    <property type="entry name" value="B5n-ttraPtase_sm"/>
    <property type="match status" value="1"/>
</dbReference>
<dbReference type="SUPFAM" id="SSF56300">
    <property type="entry name" value="Metallo-dependent phosphatases"/>
    <property type="match status" value="1"/>
</dbReference>